<comment type="function">
    <text evidence="1">Cell wall formation.</text>
</comment>
<comment type="catalytic activity">
    <reaction evidence="1">
        <text>UDP-N-acetyl-alpha-D-muramate + L-alanine + ATP = UDP-N-acetyl-alpha-D-muramoyl-L-alanine + ADP + phosphate + H(+)</text>
        <dbReference type="Rhea" id="RHEA:23372"/>
        <dbReference type="ChEBI" id="CHEBI:15378"/>
        <dbReference type="ChEBI" id="CHEBI:30616"/>
        <dbReference type="ChEBI" id="CHEBI:43474"/>
        <dbReference type="ChEBI" id="CHEBI:57972"/>
        <dbReference type="ChEBI" id="CHEBI:70757"/>
        <dbReference type="ChEBI" id="CHEBI:83898"/>
        <dbReference type="ChEBI" id="CHEBI:456216"/>
        <dbReference type="EC" id="6.3.2.8"/>
    </reaction>
</comment>
<comment type="pathway">
    <text evidence="1">Cell wall biogenesis; peptidoglycan biosynthesis.</text>
</comment>
<comment type="subcellular location">
    <subcellularLocation>
        <location evidence="1">Cytoplasm</location>
    </subcellularLocation>
</comment>
<comment type="similarity">
    <text evidence="1">Belongs to the MurCDEF family.</text>
</comment>
<accession>P61681</accession>
<gene>
    <name evidence="1" type="primary">murC</name>
    <name type="ordered locus">MAP_1896c</name>
</gene>
<evidence type="ECO:0000255" key="1">
    <source>
        <dbReference type="HAMAP-Rule" id="MF_00046"/>
    </source>
</evidence>
<proteinExistence type="inferred from homology"/>
<reference key="1">
    <citation type="journal article" date="2005" name="Proc. Natl. Acad. Sci. U.S.A.">
        <title>The complete genome sequence of Mycobacterium avium subspecies paratuberculosis.</title>
        <authorList>
            <person name="Li L."/>
            <person name="Bannantine J.P."/>
            <person name="Zhang Q."/>
            <person name="Amonsin A."/>
            <person name="May B.J."/>
            <person name="Alt D."/>
            <person name="Banerji N."/>
            <person name="Kanjilal S."/>
            <person name="Kapur V."/>
        </authorList>
    </citation>
    <scope>NUCLEOTIDE SEQUENCE [LARGE SCALE GENOMIC DNA]</scope>
    <source>
        <strain>ATCC BAA-968 / K-10</strain>
    </source>
</reference>
<dbReference type="EC" id="6.3.2.8" evidence="1"/>
<dbReference type="EMBL" id="AE016958">
    <property type="protein sequence ID" value="AAS04213.1"/>
    <property type="molecule type" value="Genomic_DNA"/>
</dbReference>
<dbReference type="RefSeq" id="WP_010949402.1">
    <property type="nucleotide sequence ID" value="NZ_CP106873.1"/>
</dbReference>
<dbReference type="SMR" id="P61681"/>
<dbReference type="STRING" id="262316.MAP_1896c"/>
<dbReference type="KEGG" id="mpa:MAP_1896c"/>
<dbReference type="PATRIC" id="fig|262316.17.peg.2010"/>
<dbReference type="eggNOG" id="COG0773">
    <property type="taxonomic scope" value="Bacteria"/>
</dbReference>
<dbReference type="HOGENOM" id="CLU_028104_2_1_11"/>
<dbReference type="UniPathway" id="UPA00219"/>
<dbReference type="Proteomes" id="UP000000580">
    <property type="component" value="Chromosome"/>
</dbReference>
<dbReference type="GO" id="GO:0005737">
    <property type="term" value="C:cytoplasm"/>
    <property type="evidence" value="ECO:0007669"/>
    <property type="project" value="UniProtKB-SubCell"/>
</dbReference>
<dbReference type="GO" id="GO:0005524">
    <property type="term" value="F:ATP binding"/>
    <property type="evidence" value="ECO:0007669"/>
    <property type="project" value="UniProtKB-UniRule"/>
</dbReference>
<dbReference type="GO" id="GO:0008763">
    <property type="term" value="F:UDP-N-acetylmuramate-L-alanine ligase activity"/>
    <property type="evidence" value="ECO:0007669"/>
    <property type="project" value="UniProtKB-UniRule"/>
</dbReference>
<dbReference type="GO" id="GO:0051301">
    <property type="term" value="P:cell division"/>
    <property type="evidence" value="ECO:0007669"/>
    <property type="project" value="UniProtKB-KW"/>
</dbReference>
<dbReference type="GO" id="GO:0071555">
    <property type="term" value="P:cell wall organization"/>
    <property type="evidence" value="ECO:0007669"/>
    <property type="project" value="UniProtKB-KW"/>
</dbReference>
<dbReference type="GO" id="GO:0009252">
    <property type="term" value="P:peptidoglycan biosynthetic process"/>
    <property type="evidence" value="ECO:0007669"/>
    <property type="project" value="UniProtKB-UniRule"/>
</dbReference>
<dbReference type="GO" id="GO:0008360">
    <property type="term" value="P:regulation of cell shape"/>
    <property type="evidence" value="ECO:0007669"/>
    <property type="project" value="UniProtKB-KW"/>
</dbReference>
<dbReference type="FunFam" id="3.40.50.720:FF:000046">
    <property type="entry name" value="UDP-N-acetylmuramate--L-alanine ligase"/>
    <property type="match status" value="1"/>
</dbReference>
<dbReference type="Gene3D" id="3.90.190.20">
    <property type="entry name" value="Mur ligase, C-terminal domain"/>
    <property type="match status" value="1"/>
</dbReference>
<dbReference type="Gene3D" id="3.40.1190.10">
    <property type="entry name" value="Mur-like, catalytic domain"/>
    <property type="match status" value="1"/>
</dbReference>
<dbReference type="Gene3D" id="3.40.50.720">
    <property type="entry name" value="NAD(P)-binding Rossmann-like Domain"/>
    <property type="match status" value="1"/>
</dbReference>
<dbReference type="HAMAP" id="MF_00046">
    <property type="entry name" value="MurC"/>
    <property type="match status" value="1"/>
</dbReference>
<dbReference type="InterPro" id="IPR036565">
    <property type="entry name" value="Mur-like_cat_sf"/>
</dbReference>
<dbReference type="InterPro" id="IPR004101">
    <property type="entry name" value="Mur_ligase_C"/>
</dbReference>
<dbReference type="InterPro" id="IPR036615">
    <property type="entry name" value="Mur_ligase_C_dom_sf"/>
</dbReference>
<dbReference type="InterPro" id="IPR013221">
    <property type="entry name" value="Mur_ligase_cen"/>
</dbReference>
<dbReference type="InterPro" id="IPR000713">
    <property type="entry name" value="Mur_ligase_N"/>
</dbReference>
<dbReference type="InterPro" id="IPR050061">
    <property type="entry name" value="MurCDEF_pg_biosynth"/>
</dbReference>
<dbReference type="InterPro" id="IPR005758">
    <property type="entry name" value="UDP-N-AcMur_Ala_ligase_MurC"/>
</dbReference>
<dbReference type="NCBIfam" id="TIGR01082">
    <property type="entry name" value="murC"/>
    <property type="match status" value="1"/>
</dbReference>
<dbReference type="PANTHER" id="PTHR43445:SF3">
    <property type="entry name" value="UDP-N-ACETYLMURAMATE--L-ALANINE LIGASE"/>
    <property type="match status" value="1"/>
</dbReference>
<dbReference type="PANTHER" id="PTHR43445">
    <property type="entry name" value="UDP-N-ACETYLMURAMATE--L-ALANINE LIGASE-RELATED"/>
    <property type="match status" value="1"/>
</dbReference>
<dbReference type="Pfam" id="PF01225">
    <property type="entry name" value="Mur_ligase"/>
    <property type="match status" value="1"/>
</dbReference>
<dbReference type="Pfam" id="PF02875">
    <property type="entry name" value="Mur_ligase_C"/>
    <property type="match status" value="1"/>
</dbReference>
<dbReference type="Pfam" id="PF08245">
    <property type="entry name" value="Mur_ligase_M"/>
    <property type="match status" value="1"/>
</dbReference>
<dbReference type="SUPFAM" id="SSF51984">
    <property type="entry name" value="MurCD N-terminal domain"/>
    <property type="match status" value="1"/>
</dbReference>
<dbReference type="SUPFAM" id="SSF53623">
    <property type="entry name" value="MurD-like peptide ligases, catalytic domain"/>
    <property type="match status" value="1"/>
</dbReference>
<dbReference type="SUPFAM" id="SSF53244">
    <property type="entry name" value="MurD-like peptide ligases, peptide-binding domain"/>
    <property type="match status" value="1"/>
</dbReference>
<feature type="chain" id="PRO_0000182119" description="UDP-N-acetylmuramate--L-alanine ligase">
    <location>
        <begin position="1"/>
        <end position="496"/>
    </location>
</feature>
<feature type="binding site" evidence="1">
    <location>
        <begin position="122"/>
        <end position="128"/>
    </location>
    <ligand>
        <name>ATP</name>
        <dbReference type="ChEBI" id="CHEBI:30616"/>
    </ligand>
</feature>
<name>MURC_MYCPA</name>
<protein>
    <recommendedName>
        <fullName evidence="1">UDP-N-acetylmuramate--L-alanine ligase</fullName>
        <ecNumber evidence="1">6.3.2.8</ecNumber>
    </recommendedName>
    <alternativeName>
        <fullName evidence="1">UDP-N-acetylmuramoyl-L-alanine synthetase</fullName>
    </alternativeName>
</protein>
<sequence>MTTDQLPAELERVHMVGIGGAGMSGIARILLDRGGLVSGSDAKESRGIHALRARGAQIRIGHDASSLDLLPGGPTAVITTHAAIPKTNPELVEARRRGIPVILRPAVLAKLMDGRTTLMVTGTHGKTTTTSMLIVALQHCGRDPSFAVGGEMGEAGTNAHHGSGDCFVAEADESDGSLLEYTPDVAVVTNIETDHLDFYGSADAYVAVFDAFVERLAPGGALVVCVDDPGAAALARRTAELGIRVLRYGSGSHGQAPSGQPLAATLVSWQQQGTEAVAQIRLAGEQQHPLVMRLSVPGRHMALNAMGALLAAIEIGAPTEAVLDGLAGFEGVRRRFELVGTAGGPAPSSTVRVFDDYAHHPTEIAATLAAVRTLLEQSGGGRSIAVFQPHLYSRTKAFAEEFGRALDAADEVFVLDVYGAREQPLAGVSGASVAEHVSVPVRYLPDFSAAAEQVAAAAAPGDVIVTMGAGDVTLLGPEIVTALRVRANRGAPGALR</sequence>
<organism>
    <name type="scientific">Mycolicibacterium paratuberculosis (strain ATCC BAA-968 / K-10)</name>
    <name type="common">Mycobacterium paratuberculosis</name>
    <dbReference type="NCBI Taxonomy" id="262316"/>
    <lineage>
        <taxon>Bacteria</taxon>
        <taxon>Bacillati</taxon>
        <taxon>Actinomycetota</taxon>
        <taxon>Actinomycetes</taxon>
        <taxon>Mycobacteriales</taxon>
        <taxon>Mycobacteriaceae</taxon>
        <taxon>Mycobacterium</taxon>
        <taxon>Mycobacterium avium complex (MAC)</taxon>
    </lineage>
</organism>
<keyword id="KW-0067">ATP-binding</keyword>
<keyword id="KW-0131">Cell cycle</keyword>
<keyword id="KW-0132">Cell division</keyword>
<keyword id="KW-0133">Cell shape</keyword>
<keyword id="KW-0961">Cell wall biogenesis/degradation</keyword>
<keyword id="KW-0963">Cytoplasm</keyword>
<keyword id="KW-0436">Ligase</keyword>
<keyword id="KW-0547">Nucleotide-binding</keyword>
<keyword id="KW-0573">Peptidoglycan synthesis</keyword>
<keyword id="KW-1185">Reference proteome</keyword>